<dbReference type="EMBL" id="CP000738">
    <property type="protein sequence ID" value="ABR59797.1"/>
    <property type="molecule type" value="Genomic_DNA"/>
</dbReference>
<dbReference type="RefSeq" id="WP_011975133.1">
    <property type="nucleotide sequence ID" value="NC_009636.1"/>
</dbReference>
<dbReference type="RefSeq" id="YP_001326632.1">
    <property type="nucleotide sequence ID" value="NC_009636.1"/>
</dbReference>
<dbReference type="SMR" id="A6U817"/>
<dbReference type="STRING" id="366394.Smed_0942"/>
<dbReference type="KEGG" id="smd:Smed_0942"/>
<dbReference type="PATRIC" id="fig|366394.8.peg.4058"/>
<dbReference type="eggNOG" id="COG2220">
    <property type="taxonomic scope" value="Bacteria"/>
</dbReference>
<dbReference type="HOGENOM" id="CLU_070010_4_0_5"/>
<dbReference type="OrthoDB" id="9789133at2"/>
<dbReference type="Proteomes" id="UP000001108">
    <property type="component" value="Chromosome"/>
</dbReference>
<dbReference type="GO" id="GO:0016787">
    <property type="term" value="F:hydrolase activity"/>
    <property type="evidence" value="ECO:0007669"/>
    <property type="project" value="UniProtKB-UniRule"/>
</dbReference>
<dbReference type="Gene3D" id="3.60.15.10">
    <property type="entry name" value="Ribonuclease Z/Hydroxyacylglutathione hydrolase-like"/>
    <property type="match status" value="1"/>
</dbReference>
<dbReference type="HAMAP" id="MF_00457">
    <property type="entry name" value="UPF0173"/>
    <property type="match status" value="1"/>
</dbReference>
<dbReference type="InterPro" id="IPR001279">
    <property type="entry name" value="Metallo-B-lactamas"/>
</dbReference>
<dbReference type="InterPro" id="IPR036866">
    <property type="entry name" value="RibonucZ/Hydroxyglut_hydro"/>
</dbReference>
<dbReference type="InterPro" id="IPR022877">
    <property type="entry name" value="UPF0173"/>
</dbReference>
<dbReference type="InterPro" id="IPR050114">
    <property type="entry name" value="UPF0173_UPF0282_UlaG_hydrolase"/>
</dbReference>
<dbReference type="NCBIfam" id="NF001911">
    <property type="entry name" value="PRK00685.1"/>
    <property type="match status" value="1"/>
</dbReference>
<dbReference type="PANTHER" id="PTHR43546:SF3">
    <property type="entry name" value="UPF0173 METAL-DEPENDENT HYDROLASE MJ1163"/>
    <property type="match status" value="1"/>
</dbReference>
<dbReference type="PANTHER" id="PTHR43546">
    <property type="entry name" value="UPF0173 METAL-DEPENDENT HYDROLASE MJ1163-RELATED"/>
    <property type="match status" value="1"/>
</dbReference>
<dbReference type="Pfam" id="PF12706">
    <property type="entry name" value="Lactamase_B_2"/>
    <property type="match status" value="1"/>
</dbReference>
<dbReference type="SMART" id="SM00849">
    <property type="entry name" value="Lactamase_B"/>
    <property type="match status" value="1"/>
</dbReference>
<dbReference type="SUPFAM" id="SSF56281">
    <property type="entry name" value="Metallo-hydrolase/oxidoreductase"/>
    <property type="match status" value="1"/>
</dbReference>
<sequence length="234" mass="24830">MKIKWLGHSAFHVETAKAKILIDPFFTGNPAFRDGERRAVTAGLTHILLTHGHGDHVGDTVAIAKETGATVLANFDLCMWLGRQGVAKLEPGNTGGTIRLGSFSATFVNALHSSAQITEDGVSHSLGNANGLVLHFDDEPTLYHMGDTDIFSDMALVQELHEPEIGIVPIGDRFTMGGAVAALACQRYFKFATAIPCHYGSFPIIDQTPETFVAGMDGASTLVATPEVGGIVNA</sequence>
<protein>
    <recommendedName>
        <fullName evidence="1">UPF0173 metal-dependent hydrolase Smed_0942</fullName>
    </recommendedName>
</protein>
<proteinExistence type="inferred from homology"/>
<gene>
    <name type="ordered locus">Smed_0942</name>
</gene>
<reference key="1">
    <citation type="submission" date="2007-06" db="EMBL/GenBank/DDBJ databases">
        <title>Complete sequence of Sinorhizobium medicae WSM419 chromosome.</title>
        <authorList>
            <consortium name="US DOE Joint Genome Institute"/>
            <person name="Copeland A."/>
            <person name="Lucas S."/>
            <person name="Lapidus A."/>
            <person name="Barry K."/>
            <person name="Glavina del Rio T."/>
            <person name="Dalin E."/>
            <person name="Tice H."/>
            <person name="Pitluck S."/>
            <person name="Chain P."/>
            <person name="Malfatti S."/>
            <person name="Shin M."/>
            <person name="Vergez L."/>
            <person name="Schmutz J."/>
            <person name="Larimer F."/>
            <person name="Land M."/>
            <person name="Hauser L."/>
            <person name="Kyrpides N."/>
            <person name="Mikhailova N."/>
            <person name="Reeve W.G."/>
            <person name="Richardson P."/>
        </authorList>
    </citation>
    <scope>NUCLEOTIDE SEQUENCE [LARGE SCALE GENOMIC DNA]</scope>
    <source>
        <strain>WSM419</strain>
    </source>
</reference>
<organism>
    <name type="scientific">Sinorhizobium medicae (strain WSM419)</name>
    <name type="common">Ensifer medicae</name>
    <dbReference type="NCBI Taxonomy" id="366394"/>
    <lineage>
        <taxon>Bacteria</taxon>
        <taxon>Pseudomonadati</taxon>
        <taxon>Pseudomonadota</taxon>
        <taxon>Alphaproteobacteria</taxon>
        <taxon>Hyphomicrobiales</taxon>
        <taxon>Rhizobiaceae</taxon>
        <taxon>Sinorhizobium/Ensifer group</taxon>
        <taxon>Sinorhizobium</taxon>
    </lineage>
</organism>
<keyword id="KW-0378">Hydrolase</keyword>
<name>Y942_SINMW</name>
<comment type="similarity">
    <text evidence="1">Belongs to the UPF0173 family.</text>
</comment>
<accession>A6U817</accession>
<evidence type="ECO:0000255" key="1">
    <source>
        <dbReference type="HAMAP-Rule" id="MF_00457"/>
    </source>
</evidence>
<feature type="chain" id="PRO_0000367217" description="UPF0173 metal-dependent hydrolase Smed_0942">
    <location>
        <begin position="1"/>
        <end position="234"/>
    </location>
</feature>